<keyword id="KW-0414">Isoprene biosynthesis</keyword>
<keyword id="KW-0548">Nucleotidyltransferase</keyword>
<keyword id="KW-0808">Transferase</keyword>
<protein>
    <recommendedName>
        <fullName evidence="1">2-C-methyl-D-erythritol 4-phosphate cytidylyltransferase</fullName>
        <ecNumber evidence="1">2.7.7.60</ecNumber>
    </recommendedName>
    <alternativeName>
        <fullName evidence="1">4-diphosphocytidyl-2C-methyl-D-erythritol synthase</fullName>
    </alternativeName>
    <alternativeName>
        <fullName evidence="1">MEP cytidylyltransferase</fullName>
        <shortName evidence="1">MCT</shortName>
    </alternativeName>
</protein>
<accession>B7VK66</accession>
<comment type="function">
    <text evidence="1">Catalyzes the formation of 4-diphosphocytidyl-2-C-methyl-D-erythritol from CTP and 2-C-methyl-D-erythritol 4-phosphate (MEP).</text>
</comment>
<comment type="catalytic activity">
    <reaction evidence="1">
        <text>2-C-methyl-D-erythritol 4-phosphate + CTP + H(+) = 4-CDP-2-C-methyl-D-erythritol + diphosphate</text>
        <dbReference type="Rhea" id="RHEA:13429"/>
        <dbReference type="ChEBI" id="CHEBI:15378"/>
        <dbReference type="ChEBI" id="CHEBI:33019"/>
        <dbReference type="ChEBI" id="CHEBI:37563"/>
        <dbReference type="ChEBI" id="CHEBI:57823"/>
        <dbReference type="ChEBI" id="CHEBI:58262"/>
        <dbReference type="EC" id="2.7.7.60"/>
    </reaction>
</comment>
<comment type="pathway">
    <text evidence="1">Isoprenoid biosynthesis; isopentenyl diphosphate biosynthesis via DXP pathway; isopentenyl diphosphate from 1-deoxy-D-xylulose 5-phosphate: step 2/6.</text>
</comment>
<comment type="similarity">
    <text evidence="1">Belongs to the IspD/TarI cytidylyltransferase family. IspD subfamily.</text>
</comment>
<evidence type="ECO:0000255" key="1">
    <source>
        <dbReference type="HAMAP-Rule" id="MF_00108"/>
    </source>
</evidence>
<dbReference type="EC" id="2.7.7.60" evidence="1"/>
<dbReference type="EMBL" id="FM954972">
    <property type="protein sequence ID" value="CAV19804.1"/>
    <property type="molecule type" value="Genomic_DNA"/>
</dbReference>
<dbReference type="SMR" id="B7VK66"/>
<dbReference type="STRING" id="575788.VS_2605"/>
<dbReference type="KEGG" id="vsp:VS_2605"/>
<dbReference type="eggNOG" id="COG1211">
    <property type="taxonomic scope" value="Bacteria"/>
</dbReference>
<dbReference type="HOGENOM" id="CLU_061281_3_1_6"/>
<dbReference type="UniPathway" id="UPA00056">
    <property type="reaction ID" value="UER00093"/>
</dbReference>
<dbReference type="Proteomes" id="UP000009100">
    <property type="component" value="Chromosome 1"/>
</dbReference>
<dbReference type="GO" id="GO:0050518">
    <property type="term" value="F:2-C-methyl-D-erythritol 4-phosphate cytidylyltransferase activity"/>
    <property type="evidence" value="ECO:0007669"/>
    <property type="project" value="UniProtKB-UniRule"/>
</dbReference>
<dbReference type="GO" id="GO:0019288">
    <property type="term" value="P:isopentenyl diphosphate biosynthetic process, methylerythritol 4-phosphate pathway"/>
    <property type="evidence" value="ECO:0007669"/>
    <property type="project" value="UniProtKB-UniRule"/>
</dbReference>
<dbReference type="CDD" id="cd02516">
    <property type="entry name" value="CDP-ME_synthetase"/>
    <property type="match status" value="1"/>
</dbReference>
<dbReference type="FunFam" id="3.90.550.10:FF:000003">
    <property type="entry name" value="2-C-methyl-D-erythritol 4-phosphate cytidylyltransferase"/>
    <property type="match status" value="1"/>
</dbReference>
<dbReference type="Gene3D" id="3.90.550.10">
    <property type="entry name" value="Spore Coat Polysaccharide Biosynthesis Protein SpsA, Chain A"/>
    <property type="match status" value="1"/>
</dbReference>
<dbReference type="HAMAP" id="MF_00108">
    <property type="entry name" value="IspD"/>
    <property type="match status" value="1"/>
</dbReference>
<dbReference type="InterPro" id="IPR001228">
    <property type="entry name" value="IspD"/>
</dbReference>
<dbReference type="InterPro" id="IPR034683">
    <property type="entry name" value="IspD/TarI"/>
</dbReference>
<dbReference type="InterPro" id="IPR050088">
    <property type="entry name" value="IspD/TarI_cytidylyltransf_bact"/>
</dbReference>
<dbReference type="InterPro" id="IPR018294">
    <property type="entry name" value="ISPD_synthase_CS"/>
</dbReference>
<dbReference type="InterPro" id="IPR029044">
    <property type="entry name" value="Nucleotide-diphossugar_trans"/>
</dbReference>
<dbReference type="NCBIfam" id="TIGR00453">
    <property type="entry name" value="ispD"/>
    <property type="match status" value="1"/>
</dbReference>
<dbReference type="PANTHER" id="PTHR32125">
    <property type="entry name" value="2-C-METHYL-D-ERYTHRITOL 4-PHOSPHATE CYTIDYLYLTRANSFERASE, CHLOROPLASTIC"/>
    <property type="match status" value="1"/>
</dbReference>
<dbReference type="PANTHER" id="PTHR32125:SF4">
    <property type="entry name" value="2-C-METHYL-D-ERYTHRITOL 4-PHOSPHATE CYTIDYLYLTRANSFERASE, CHLOROPLASTIC"/>
    <property type="match status" value="1"/>
</dbReference>
<dbReference type="Pfam" id="PF01128">
    <property type="entry name" value="IspD"/>
    <property type="match status" value="1"/>
</dbReference>
<dbReference type="SUPFAM" id="SSF53448">
    <property type="entry name" value="Nucleotide-diphospho-sugar transferases"/>
    <property type="match status" value="1"/>
</dbReference>
<dbReference type="PROSITE" id="PS01295">
    <property type="entry name" value="ISPD"/>
    <property type="match status" value="1"/>
</dbReference>
<sequence>MSTQLQSVIAVVPAAGVGSRMKADRPKQYLKINGKTILEHTIEKLLSHPQVSQIVVAISDDDPYYPELALNQNPKVVRVSGGSERADSVLSALNCIAEQQLSDWVMVHDAARPCVQLSDIDKLISGAMSHDVGAILAAPVRDTMKRGAQGQIEHTVERADLWHALTPQMFRAKPLWNALSEALQQGVSITDEASAFEWKGLSPALVAGRSDNFKITQPEDLALAEFYLSQNKE</sequence>
<proteinExistence type="inferred from homology"/>
<reference key="1">
    <citation type="submission" date="2009-02" db="EMBL/GenBank/DDBJ databases">
        <title>Vibrio splendidus str. LGP32 complete genome.</title>
        <authorList>
            <person name="Mazel D."/>
            <person name="Le Roux F."/>
        </authorList>
    </citation>
    <scope>NUCLEOTIDE SEQUENCE [LARGE SCALE GENOMIC DNA]</scope>
    <source>
        <strain>LGP32</strain>
    </source>
</reference>
<name>ISPD_VIBA3</name>
<gene>
    <name evidence="1" type="primary">ispD</name>
    <name type="ordered locus">VS_2605</name>
</gene>
<organism>
    <name type="scientific">Vibrio atlanticus (strain LGP32)</name>
    <name type="common">Vibrio splendidus (strain Mel32)</name>
    <dbReference type="NCBI Taxonomy" id="575788"/>
    <lineage>
        <taxon>Bacteria</taxon>
        <taxon>Pseudomonadati</taxon>
        <taxon>Pseudomonadota</taxon>
        <taxon>Gammaproteobacteria</taxon>
        <taxon>Vibrionales</taxon>
        <taxon>Vibrionaceae</taxon>
        <taxon>Vibrio</taxon>
    </lineage>
</organism>
<feature type="chain" id="PRO_1000202899" description="2-C-methyl-D-erythritol 4-phosphate cytidylyltransferase">
    <location>
        <begin position="1"/>
        <end position="233"/>
    </location>
</feature>
<feature type="site" description="Transition state stabilizer" evidence="1">
    <location>
        <position position="20"/>
    </location>
</feature>
<feature type="site" description="Transition state stabilizer" evidence="1">
    <location>
        <position position="27"/>
    </location>
</feature>
<feature type="site" description="Positions MEP for the nucleophilic attack" evidence="1">
    <location>
        <position position="158"/>
    </location>
</feature>
<feature type="site" description="Positions MEP for the nucleophilic attack" evidence="1">
    <location>
        <position position="214"/>
    </location>
</feature>